<keyword id="KW-0002">3D-structure</keyword>
<keyword id="KW-0007">Acetylation</keyword>
<keyword id="KW-0025">Alternative splicing</keyword>
<keyword id="KW-0028">Amino-acid biosynthesis</keyword>
<keyword id="KW-0032">Aminotransferase</keyword>
<keyword id="KW-0225">Disease variant</keyword>
<keyword id="KW-0597">Phosphoprotein</keyword>
<keyword id="KW-1267">Proteomics identification</keyword>
<keyword id="KW-0663">Pyridoxal phosphate</keyword>
<keyword id="KW-1185">Reference proteome</keyword>
<keyword id="KW-0718">Serine biosynthesis</keyword>
<keyword id="KW-0808">Transferase</keyword>
<sequence>MDAPRQVVNFGPGPAKLPHSVLLEIQKELLDYKGVGISVLEMSHRSSDFAKIINNTENLVRELLAVPDNYKVIFLQGGGCGQFSAVPLNLIGLKAGRCADYVVTGAWSAKAAEEAKKFGTINIVHPKLGSYTKIPDPSTWNLNPDASYVYYCANETVHGVEFDFIPDVKGAVLVCDMSSNFLSKPVDVSKFGVIFAGAQKNVGSAGVTVVIVRDDLLGFALRECPSVLEYKVQAGNSSLYNTPPCFSIYVMGLVLEWIKNNGGAAAMEKLSSIKSQTIYEIIDNSQGFYVCPVEPQNRSKMNIPFRIGNAKGDDALEKRFLDKALELNMLSLKGHRSVGGIRASLYNAVTIEDVQKLAAFMKKFLEMHQL</sequence>
<accession>Q9Y617</accession>
<accession>Q5T7G5</accession>
<accession>Q5T7G6</accession>
<accession>Q96AW2</accession>
<accession>Q9BQ12</accession>
<gene>
    <name evidence="14" type="primary">PSAT1</name>
    <name type="synonym">PSA</name>
</gene>
<reference key="1">
    <citation type="journal article" date="2003" name="Biochem. J.">
        <title>Characterization of human phosphoserine aminotransferase involved in the phosphorylated pathway of L-serine biosynthesis.</title>
        <authorList>
            <person name="Baek J.Y."/>
            <person name="Jun Y.D."/>
            <person name="Taub D."/>
            <person name="Kim Y.H."/>
        </authorList>
    </citation>
    <scope>NUCLEOTIDE SEQUENCE [MRNA] (ISOFORMS 1 AND 2)</scope>
    <scope>TISSUE SPECIFICITY</scope>
</reference>
<reference key="2">
    <citation type="submission" date="2003-05" db="EMBL/GenBank/DDBJ databases">
        <title>Cloning of human full-length CDSs in BD Creator(TM) system donor vector.</title>
        <authorList>
            <person name="Kalnine N."/>
            <person name="Chen X."/>
            <person name="Rolfs A."/>
            <person name="Halleck A."/>
            <person name="Hines L."/>
            <person name="Eisenstein S."/>
            <person name="Koundinya M."/>
            <person name="Raphael J."/>
            <person name="Moreira D."/>
            <person name="Kelley T."/>
            <person name="LaBaer J."/>
            <person name="Lin Y."/>
            <person name="Phelan M."/>
            <person name="Farmer A."/>
        </authorList>
    </citation>
    <scope>NUCLEOTIDE SEQUENCE [LARGE SCALE MRNA] (ISOFORM 1)</scope>
</reference>
<reference key="3">
    <citation type="journal article" date="2004" name="Nature">
        <title>DNA sequence and analysis of human chromosome 9.</title>
        <authorList>
            <person name="Humphray S.J."/>
            <person name="Oliver K."/>
            <person name="Hunt A.R."/>
            <person name="Plumb R.W."/>
            <person name="Loveland J.E."/>
            <person name="Howe K.L."/>
            <person name="Andrews T.D."/>
            <person name="Searle S."/>
            <person name="Hunt S.E."/>
            <person name="Scott C.E."/>
            <person name="Jones M.C."/>
            <person name="Ainscough R."/>
            <person name="Almeida J.P."/>
            <person name="Ambrose K.D."/>
            <person name="Ashwell R.I.S."/>
            <person name="Babbage A.K."/>
            <person name="Babbage S."/>
            <person name="Bagguley C.L."/>
            <person name="Bailey J."/>
            <person name="Banerjee R."/>
            <person name="Barker D.J."/>
            <person name="Barlow K.F."/>
            <person name="Bates K."/>
            <person name="Beasley H."/>
            <person name="Beasley O."/>
            <person name="Bird C.P."/>
            <person name="Bray-Allen S."/>
            <person name="Brown A.J."/>
            <person name="Brown J.Y."/>
            <person name="Burford D."/>
            <person name="Burrill W."/>
            <person name="Burton J."/>
            <person name="Carder C."/>
            <person name="Carter N.P."/>
            <person name="Chapman J.C."/>
            <person name="Chen Y."/>
            <person name="Clarke G."/>
            <person name="Clark S.Y."/>
            <person name="Clee C.M."/>
            <person name="Clegg S."/>
            <person name="Collier R.E."/>
            <person name="Corby N."/>
            <person name="Crosier M."/>
            <person name="Cummings A.T."/>
            <person name="Davies J."/>
            <person name="Dhami P."/>
            <person name="Dunn M."/>
            <person name="Dutta I."/>
            <person name="Dyer L.W."/>
            <person name="Earthrowl M.E."/>
            <person name="Faulkner L."/>
            <person name="Fleming C.J."/>
            <person name="Frankish A."/>
            <person name="Frankland J.A."/>
            <person name="French L."/>
            <person name="Fricker D.G."/>
            <person name="Garner P."/>
            <person name="Garnett J."/>
            <person name="Ghori J."/>
            <person name="Gilbert J.G.R."/>
            <person name="Glison C."/>
            <person name="Grafham D.V."/>
            <person name="Gribble S."/>
            <person name="Griffiths C."/>
            <person name="Griffiths-Jones S."/>
            <person name="Grocock R."/>
            <person name="Guy J."/>
            <person name="Hall R.E."/>
            <person name="Hammond S."/>
            <person name="Harley J.L."/>
            <person name="Harrison E.S.I."/>
            <person name="Hart E.A."/>
            <person name="Heath P.D."/>
            <person name="Henderson C.D."/>
            <person name="Hopkins B.L."/>
            <person name="Howard P.J."/>
            <person name="Howden P.J."/>
            <person name="Huckle E."/>
            <person name="Johnson C."/>
            <person name="Johnson D."/>
            <person name="Joy A.A."/>
            <person name="Kay M."/>
            <person name="Keenan S."/>
            <person name="Kershaw J.K."/>
            <person name="Kimberley A.M."/>
            <person name="King A."/>
            <person name="Knights A."/>
            <person name="Laird G.K."/>
            <person name="Langford C."/>
            <person name="Lawlor S."/>
            <person name="Leongamornlert D.A."/>
            <person name="Leversha M."/>
            <person name="Lloyd C."/>
            <person name="Lloyd D.M."/>
            <person name="Lovell J."/>
            <person name="Martin S."/>
            <person name="Mashreghi-Mohammadi M."/>
            <person name="Matthews L."/>
            <person name="McLaren S."/>
            <person name="McLay K.E."/>
            <person name="McMurray A."/>
            <person name="Milne S."/>
            <person name="Nickerson T."/>
            <person name="Nisbett J."/>
            <person name="Nordsiek G."/>
            <person name="Pearce A.V."/>
            <person name="Peck A.I."/>
            <person name="Porter K.M."/>
            <person name="Pandian R."/>
            <person name="Pelan S."/>
            <person name="Phillimore B."/>
            <person name="Povey S."/>
            <person name="Ramsey Y."/>
            <person name="Rand V."/>
            <person name="Scharfe M."/>
            <person name="Sehra H.K."/>
            <person name="Shownkeen R."/>
            <person name="Sims S.K."/>
            <person name="Skuce C.D."/>
            <person name="Smith M."/>
            <person name="Steward C.A."/>
            <person name="Swarbreck D."/>
            <person name="Sycamore N."/>
            <person name="Tester J."/>
            <person name="Thorpe A."/>
            <person name="Tracey A."/>
            <person name="Tromans A."/>
            <person name="Thomas D.W."/>
            <person name="Wall M."/>
            <person name="Wallis J.M."/>
            <person name="West A.P."/>
            <person name="Whitehead S.L."/>
            <person name="Willey D.L."/>
            <person name="Williams S.A."/>
            <person name="Wilming L."/>
            <person name="Wray P.W."/>
            <person name="Young L."/>
            <person name="Ashurst J.L."/>
            <person name="Coulson A."/>
            <person name="Blocker H."/>
            <person name="Durbin R.M."/>
            <person name="Sulston J.E."/>
            <person name="Hubbard T."/>
            <person name="Jackson M.J."/>
            <person name="Bentley D.R."/>
            <person name="Beck S."/>
            <person name="Rogers J."/>
            <person name="Dunham I."/>
        </authorList>
    </citation>
    <scope>NUCLEOTIDE SEQUENCE [LARGE SCALE GENOMIC DNA]</scope>
</reference>
<reference key="4">
    <citation type="submission" date="2005-07" db="EMBL/GenBank/DDBJ databases">
        <authorList>
            <person name="Mural R.J."/>
            <person name="Istrail S."/>
            <person name="Sutton G.G."/>
            <person name="Florea L."/>
            <person name="Halpern A.L."/>
            <person name="Mobarry C.M."/>
            <person name="Lippert R."/>
            <person name="Walenz B."/>
            <person name="Shatkay H."/>
            <person name="Dew I."/>
            <person name="Miller J.R."/>
            <person name="Flanigan M.J."/>
            <person name="Edwards N.J."/>
            <person name="Bolanos R."/>
            <person name="Fasulo D."/>
            <person name="Halldorsson B.V."/>
            <person name="Hannenhalli S."/>
            <person name="Turner R."/>
            <person name="Yooseph S."/>
            <person name="Lu F."/>
            <person name="Nusskern D.R."/>
            <person name="Shue B.C."/>
            <person name="Zheng X.H."/>
            <person name="Zhong F."/>
            <person name="Delcher A.L."/>
            <person name="Huson D.H."/>
            <person name="Kravitz S.A."/>
            <person name="Mouchard L."/>
            <person name="Reinert K."/>
            <person name="Remington K.A."/>
            <person name="Clark A.G."/>
            <person name="Waterman M.S."/>
            <person name="Eichler E.E."/>
            <person name="Adams M.D."/>
            <person name="Hunkapiller M.W."/>
            <person name="Myers E.W."/>
            <person name="Venter J.C."/>
        </authorList>
    </citation>
    <scope>NUCLEOTIDE SEQUENCE [LARGE SCALE GENOMIC DNA]</scope>
</reference>
<reference key="5">
    <citation type="journal article" date="2004" name="Genome Res.">
        <title>The status, quality, and expansion of the NIH full-length cDNA project: the Mammalian Gene Collection (MGC).</title>
        <authorList>
            <consortium name="The MGC Project Team"/>
        </authorList>
    </citation>
    <scope>NUCLEOTIDE SEQUENCE [LARGE SCALE MRNA] (ISOFORMS 1 AND 2)</scope>
    <source>
        <tissue>Lung</tissue>
        <tissue>Lymph</tissue>
        <tissue>Placenta</tissue>
    </source>
</reference>
<reference key="6">
    <citation type="journal article" date="2003" name="Nature">
        <title>Proteomic characterization of the human centrosome by protein correlation profiling.</title>
        <authorList>
            <person name="Andersen J.S."/>
            <person name="Wilkinson C.J."/>
            <person name="Mayor T."/>
            <person name="Mortensen P."/>
            <person name="Nigg E.A."/>
            <person name="Mann M."/>
        </authorList>
    </citation>
    <scope>IDENTIFICATION BY MASS SPECTROMETRY</scope>
    <source>
        <tissue>Lymphoblast</tissue>
    </source>
</reference>
<reference key="7">
    <citation type="journal article" date="2009" name="Anal. Chem.">
        <title>Lys-N and trypsin cover complementary parts of the phosphoproteome in a refined SCX-based approach.</title>
        <authorList>
            <person name="Gauci S."/>
            <person name="Helbig A.O."/>
            <person name="Slijper M."/>
            <person name="Krijgsveld J."/>
            <person name="Heck A.J."/>
            <person name="Mohammed S."/>
        </authorList>
    </citation>
    <scope>ACETYLATION [LARGE SCALE ANALYSIS] AT MET-1</scope>
    <scope>IDENTIFICATION BY MASS SPECTROMETRY [LARGE SCALE ANALYSIS]</scope>
</reference>
<reference key="8">
    <citation type="journal article" date="2009" name="Science">
        <title>Lysine acetylation targets protein complexes and co-regulates major cellular functions.</title>
        <authorList>
            <person name="Choudhary C."/>
            <person name="Kumar C."/>
            <person name="Gnad F."/>
            <person name="Nielsen M.L."/>
            <person name="Rehman M."/>
            <person name="Walther T.C."/>
            <person name="Olsen J.V."/>
            <person name="Mann M."/>
        </authorList>
    </citation>
    <scope>ACETYLATION [LARGE SCALE ANALYSIS] AT LYS-51; LYS-269; LYS-318; LYS-323 AND LYS-333</scope>
    <scope>IDENTIFICATION BY MASS SPECTROMETRY [LARGE SCALE ANALYSIS]</scope>
</reference>
<reference key="9">
    <citation type="journal article" date="2011" name="BMC Syst. Biol.">
        <title>Initial characterization of the human central proteome.</title>
        <authorList>
            <person name="Burkard T.R."/>
            <person name="Planyavsky M."/>
            <person name="Kaupe I."/>
            <person name="Breitwieser F.P."/>
            <person name="Buerckstuemmer T."/>
            <person name="Bennett K.L."/>
            <person name="Superti-Furga G."/>
            <person name="Colinge J."/>
        </authorList>
    </citation>
    <scope>IDENTIFICATION BY MASS SPECTROMETRY [LARGE SCALE ANALYSIS]</scope>
</reference>
<reference key="10">
    <citation type="journal article" date="2013" name="J. Proteome Res.">
        <title>Toward a comprehensive characterization of a human cancer cell phosphoproteome.</title>
        <authorList>
            <person name="Zhou H."/>
            <person name="Di Palma S."/>
            <person name="Preisinger C."/>
            <person name="Peng M."/>
            <person name="Polat A.N."/>
            <person name="Heck A.J."/>
            <person name="Mohammed S."/>
        </authorList>
    </citation>
    <scope>PHOSPHORYLATION [LARGE SCALE ANALYSIS] AT SER-331</scope>
    <scope>IDENTIFICATION BY MASS SPECTROMETRY [LARGE SCALE ANALYSIS]</scope>
    <source>
        <tissue>Cervix carcinoma</tissue>
        <tissue>Erythroleukemia</tissue>
    </source>
</reference>
<reference key="11">
    <citation type="submission" date="2008-08" db="PDB data bank">
        <title>Human phosphoserine aminotransferase in complex with PLP.</title>
        <authorList>
            <consortium name="Structural Genomics Consortium (SGC)"/>
            <person name="Lehtio L."/>
            <person name="Karlberg T."/>
            <person name="Andersson J."/>
            <person name="Arrowsmith C.H."/>
            <person name="Berglund H."/>
            <person name="Bountra C."/>
            <person name="Collins R."/>
            <person name="Dahlgren L.G."/>
            <person name="Edwards A.M."/>
            <person name="Flodin S."/>
            <person name="Flores A."/>
            <person name="Graslund S."/>
            <person name="Hammarstrom M."/>
            <person name="Johansson A."/>
            <person name="Johansson I."/>
            <person name="Kotenyova T."/>
            <person name="Moche M."/>
            <person name="Nilsson M.E."/>
            <person name="Nordlund P."/>
            <person name="Nyman T."/>
            <person name="Olesen K."/>
            <person name="Persson C."/>
            <person name="Sagemark J."/>
            <person name="Thorsell S.G."/>
            <person name="Tresaugues L."/>
            <person name="Van Den Berg S."/>
            <person name="Welin M."/>
            <person name="Wikstrom M."/>
            <person name="Wisniewska M."/>
            <person name="Weigelt J."/>
            <person name="Schueler H."/>
        </authorList>
    </citation>
    <scope>X-RAY CRYSTALLOGRAPHY (2.50 ANGSTROMS) OF 17-370 IN COMPLEX WITH PYRIDOXAL 5'-PHOSPHATE</scope>
    <scope>COFACTOR</scope>
    <scope>PYRIDOXAL PHOSPHATE AT LYS-200</scope>
</reference>
<reference key="12">
    <citation type="journal article" date="2023" name="Protein Sci.">
        <title>L-serine biosynthesis in the human central nervous system: Structure and function of phosphoserine aminotransferase.</title>
        <authorList>
            <person name="Marchesani F."/>
            <person name="Zangelmi E."/>
            <person name="Murtas G."/>
            <person name="Costanzi E."/>
            <person name="Ullah R."/>
            <person name="Peracchi A."/>
            <person name="Bruno S."/>
            <person name="Pollegioni L."/>
            <person name="Mozzarelli A."/>
            <person name="Storici P."/>
            <person name="Campanini B."/>
        </authorList>
    </citation>
    <scope>X-RAY CRYSTALLOGRAPHY (2.46 ANGSTROMS) OF APOENZYME AND IN COMPLEX WITH O-PHOSPHOSERINE; PLP AND PMP</scope>
    <scope>FUNCTION</scope>
    <scope>CATALYTIC ACTIVITY</scope>
    <scope>BIOPHYSICOCHEMICAL PROPERTIES</scope>
    <scope>SUBUNIT</scope>
    <scope>ACTIVITY REGULATION</scope>
    <scope>COFACTOR</scope>
    <scope>PYRIDOXAL PHOSPHATE AT LYS-200</scope>
</reference>
<reference key="13">
    <citation type="journal article" date="2007" name="Am. J. Hum. Genet.">
        <title>Phosphoserine aminotransferase deficiency: a novel disorder of the serine biosynthesis pathway.</title>
        <authorList>
            <person name="Hart C.E."/>
            <person name="Race V."/>
            <person name="Achouri Y."/>
            <person name="Wiame E."/>
            <person name="Sharrard M."/>
            <person name="Olpin S.E."/>
            <person name="Watkinson J."/>
            <person name="Bonham J.R."/>
            <person name="Jaeken J."/>
            <person name="Matthijs G."/>
            <person name="Van Schaftingen E."/>
        </authorList>
    </citation>
    <scope>VARIANT PSATD ALA-100</scope>
    <scope>INVOLVEMENT IN PSATD</scope>
    <scope>BIOPHYSICOCHEMICAL PROPERTIES</scope>
</reference>
<reference key="14">
    <citation type="journal article" date="2014" name="Am. J. Hum. Genet.">
        <title>Neu-Laxova syndrome is a heterogeneous metabolic disorder caused by defects in enzymes of the L-serine biosynthesis pathway.</title>
        <authorList>
            <person name="Acuna-Hidalgo R."/>
            <person name="Schanze D."/>
            <person name="Kariminejad A."/>
            <person name="Nordgren A."/>
            <person name="Kariminejad M.H."/>
            <person name="Conner P."/>
            <person name="Grigelioniene G."/>
            <person name="Nilsson D."/>
            <person name="Nordenskjold M."/>
            <person name="Wedell A."/>
            <person name="Freyer C."/>
            <person name="Wredenberg A."/>
            <person name="Wieczorek D."/>
            <person name="Gillessen-Kaesbach G."/>
            <person name="Kayserili H."/>
            <person name="Elcioglu N."/>
            <person name="Ghaderi-Sohi S."/>
            <person name="Goodarzi P."/>
            <person name="Setayesh H."/>
            <person name="van de Vorst M."/>
            <person name="Steehouwer M."/>
            <person name="Pfundt R."/>
            <person name="Krabichler B."/>
            <person name="Curry C."/>
            <person name="MacKenzie M.G."/>
            <person name="Boycott K.M."/>
            <person name="Gilissen C."/>
            <person name="Janecke A.R."/>
            <person name="Hoischen A."/>
            <person name="Zenker M."/>
        </authorList>
    </citation>
    <scope>VARIANTS NLS2 VAL-99 AND LEU-179</scope>
    <scope>INVOLVEMENT IN NLS2</scope>
</reference>
<reference key="15">
    <citation type="journal article" date="2019" name="Eur. J. Dermatol.">
        <title>Novel and recurrent PHGDH and PSAT1 mutations in Chinese patients with Neu-Laxova syndrome.</title>
        <authorList>
            <person name="Ni C."/>
            <person name="Cheng R.H."/>
            <person name="Zhang J."/>
            <person name="Liang J.Y."/>
            <person name="Wei R.Q."/>
            <person name="Li M."/>
            <person name="Yao Z.R."/>
        </authorList>
    </citation>
    <scope>VARIANTS NLS2 ASN-70 AND TRP-342</scope>
</reference>
<reference key="16">
    <citation type="journal article" date="2020" name="Hum. Mutat.">
        <title>Expanding the genotypic and phenotypic spectrum of severe serine biosynthesis disorders.</title>
        <authorList>
            <person name="Abdelfattah F."/>
            <person name="Kariminejad A."/>
            <person name="Kahlert A.K."/>
            <person name="Morrison P.J."/>
            <person name="Gumus E."/>
            <person name="Mathews K.D."/>
            <person name="Darbro B.W."/>
            <person name="Amor D.J."/>
            <person name="Walsh M."/>
            <person name="Sznajer Y."/>
            <person name="Weiss L."/>
            <person name="Weidensee S."/>
            <person name="Chitayat D."/>
            <person name="Shannon P."/>
            <person name="Bermejo-Sanchez E."/>
            <person name="Riano-Galan I."/>
            <person name="Hayes I."/>
            <person name="Poke G."/>
            <person name="Rooryck C."/>
            <person name="Pennamen P."/>
            <person name="Khung-Savatovsky S."/>
            <person name="Toutain A."/>
            <person name="Vuillaume M.L."/>
            <person name="Ghaderi-Sohi S."/>
            <person name="Kariminejad M.H."/>
            <person name="Weinert S."/>
            <person name="Sticht H."/>
            <person name="Zenker M."/>
            <person name="Schanze D."/>
        </authorList>
    </citation>
    <scope>VARIANT PSATD ARG-43</scope>
    <scope>VARIANTS NLS2 TRP-61; TRP-79; VAL-99; GLN-155 AND ARG-245</scope>
</reference>
<reference key="17">
    <citation type="journal article" date="2023" name="Biomolecules">
        <title>Phosphoserine aminotransferase pathogenetic variants in serine deficiency disorders: A functional characterization.</title>
        <authorList>
            <person name="Marchesani F."/>
            <person name="Michielon A."/>
            <person name="Viale E."/>
            <person name="Bianchera A."/>
            <person name="Cavazzini D."/>
            <person name="Pollegioni L."/>
            <person name="Murtas G."/>
            <person name="Mozzarelli A."/>
            <person name="Bettati S."/>
            <person name="Peracchi A."/>
            <person name="Campanini B."/>
            <person name="Bruno S."/>
        </authorList>
    </citation>
    <scope>CHARACTERIZATION OF VARIANTS PSATD ARG-43 AND ALA-100</scope>
    <scope>CHARACTERIZATION OF VARIANTS NLS2 TRP-79; VAL-99; LEU-179; ARG-245 AND TRP-342</scope>
    <scope>CHARACTERIZATION OF VARIANT ALA-87</scope>
    <scope>FUNCTION</scope>
    <scope>PATHWAY</scope>
    <scope>BIOPHYSICOCHEMICAL PROPERTIES</scope>
    <scope>CATALYTIC ACTIVITY</scope>
    <scope>SUBUNIT</scope>
</reference>
<comment type="function">
    <text evidence="7 8">Involved in L-serine biosynthesis via the phosphorylated pathway, a three-step pathway converting the glycolytic intermediate 3-phospho-D-glycerate into L-serine. Catalyzes the second step, that is the pyridoxal 5'-phosphate-dependent transamination of 3-phosphohydroxypyruvate and L-glutamate to O-phosphoserine (OPS) and alpha-ketoglutarate.</text>
</comment>
<comment type="catalytic activity">
    <reaction evidence="7 8">
        <text>O-phospho-L-serine + 2-oxoglutarate = 3-phosphooxypyruvate + L-glutamate</text>
        <dbReference type="Rhea" id="RHEA:14329"/>
        <dbReference type="ChEBI" id="CHEBI:16810"/>
        <dbReference type="ChEBI" id="CHEBI:18110"/>
        <dbReference type="ChEBI" id="CHEBI:29985"/>
        <dbReference type="ChEBI" id="CHEBI:57524"/>
        <dbReference type="EC" id="2.6.1.52"/>
    </reaction>
    <physiologicalReaction direction="right-to-left" evidence="8 13">
        <dbReference type="Rhea" id="RHEA:14331"/>
    </physiologicalReaction>
</comment>
<comment type="cofactor">
    <cofactor evidence="7 9">
        <name>pyridoxal 5'-phosphate</name>
        <dbReference type="ChEBI" id="CHEBI:597326"/>
    </cofactor>
    <text evidence="7 9">Binds 2 pyridoxal phosphate molecules per dimer, each cofactor is bound at the monomer-monomer interface and forms contacts with residues from both chains.</text>
</comment>
<comment type="activity regulation">
    <text evidence="7">Phosphoserine transaminase activity is strongly stimulated by increasing the ionic strength.</text>
</comment>
<comment type="biophysicochemical properties">
    <kinetics>
        <KM evidence="7">4 uM for 3-phosphohydroxypyruvate</KM>
        <KM evidence="3">5 uM for O-phospho-L-serine</KM>
        <KM evidence="7">33 uM for O-phospho-L-serine</KM>
        <KM evidence="7">360 uM for 2-oxoglutarate</KM>
        <KM evidence="7 8">2400 uM for L-glutamate</KM>
        <Vmax evidence="3">1.35 umol/min/mg enzyme for the transaminase reaction with 3-phosphooxypyruvate and L-glutamate as substrates</Vmax>
        <text evidence="7">kcat is 23.8 sec (-1) for the transaminase reaction with 3-phosphooxypyruvate and L-glutamate as substrates. kcat is 8.6 sec (-1) for the transaminase reaction with 2-oxoglutarate and O-phospho-L-serine as substrates.</text>
    </kinetics>
    <phDependence>
        <text evidence="7">Optimum pH is 6.9.</text>
    </phDependence>
</comment>
<comment type="pathway">
    <text evidence="8">Amino-acid biosynthesis; L-serine biosynthesis; L-serine from 3-phospho-D-glycerate: step 2/3.</text>
</comment>
<comment type="subunit">
    <text evidence="7 8">Homodimer.</text>
</comment>
<comment type="interaction">
    <interactant intactId="EBI-709652">
        <id>Q9Y617</id>
    </interactant>
    <interactant intactId="EBI-1049597">
        <id>P27797</id>
        <label>CALR</label>
    </interactant>
    <organismsDiffer>false</organismsDiffer>
    <experiments>3</experiments>
</comment>
<comment type="interaction">
    <interactant intactId="EBI-709652">
        <id>Q9Y617</id>
    </interactant>
    <interactant intactId="EBI-727477">
        <id>P12830</id>
        <label>CDH1</label>
    </interactant>
    <organismsDiffer>false</organismsDiffer>
    <experiments>3</experiments>
</comment>
<comment type="interaction">
    <interactant intactId="EBI-709652">
        <id>Q9Y617</id>
    </interactant>
    <interactant intactId="EBI-351007">
        <id>P36957</id>
        <label>DLST</label>
    </interactant>
    <organismsDiffer>false</organismsDiffer>
    <experiments>3</experiments>
</comment>
<comment type="interaction">
    <interactant intactId="EBI-709652">
        <id>Q9Y617</id>
    </interactant>
    <interactant intactId="EBI-1055945">
        <id>Q8TDX7</id>
        <label>NEK7</label>
    </interactant>
    <organismsDiffer>false</organismsDiffer>
    <experiments>3</experiments>
</comment>
<comment type="interaction">
    <interactant intactId="EBI-709652">
        <id>Q9Y617</id>
    </interactant>
    <interactant intactId="EBI-709652">
        <id>Q9Y617</id>
        <label>PSAT1</label>
    </interactant>
    <organismsDiffer>false</organismsDiffer>
    <experiments>3</experiments>
</comment>
<comment type="alternative products">
    <event type="alternative splicing"/>
    <isoform>
        <id>Q9Y617-1</id>
        <name>1</name>
        <name>Alpha</name>
        <sequence type="displayed"/>
    </isoform>
    <isoform>
        <id>Q9Y617-2</id>
        <name>2</name>
        <name>Beta</name>
        <sequence type="described" ref="VSP_000237"/>
    </isoform>
</comment>
<comment type="tissue specificity">
    <text evidence="2">Expressed at high levels in the brain, liver, kidney and pancreas, and very weakly expressed in the thymus, prostate, testis and colon.</text>
</comment>
<comment type="disease" evidence="3 6 8">
    <disease id="DI-02163">
        <name>Phosphoserine aminotransferase deficiency</name>
        <acronym>PSATD</acronym>
        <description>Characterized biochemically by low plasma and cerebrospinal fluid concentrations of serine and glycine and clinically by intractable seizures, acquired microcephaly, hypertonia, and psychomotor retardation.</description>
        <dbReference type="MIM" id="610992"/>
    </disease>
    <text>The disease is caused by variants affecting the gene represented in this entry.</text>
</comment>
<comment type="disease" evidence="4 5 6 8">
    <disease id="DI-04253">
        <name>Neu-Laxova syndrome 2</name>
        <acronym>NLS2</acronym>
        <description>A form of Neu-Laxova syndrome, a lethal, autosomal recessive multiple malformation syndrome characterized by ichthyosis, marked intrauterine growth restriction, microcephaly, short neck, limb deformities, hypoplastic lungs, edema, and central nervous system anomalies. These include lissencephaly, cerebellar hypoplasia and/or abnormal/agenesis of the corpus callosum. Abnormal facial features include severe proptosis with ectropion, hypertelorism, micrognathia, flattened nose, and malformed ears.</description>
        <dbReference type="MIM" id="616038"/>
    </disease>
    <text>The disease is caused by variants affecting the gene represented in this entry.</text>
</comment>
<comment type="similarity">
    <text evidence="12">Belongs to the class-V pyridoxal-phosphate-dependent aminotransferase family. SerC subfamily.</text>
</comment>
<feature type="chain" id="PRO_0000150135" description="Phosphoserine aminotransferase">
    <location>
        <begin position="1"/>
        <end position="370"/>
    </location>
</feature>
<feature type="binding site" description="in other chain" evidence="7 17">
    <location>
        <position position="44"/>
    </location>
    <ligand>
        <name>O-phospho-L-serine</name>
        <dbReference type="ChEBI" id="CHEBI:57524"/>
        <note>ligand shared between homodimeric partners</note>
    </ligand>
</feature>
<feature type="binding site" description="in other chain" evidence="7 17">
    <location>
        <position position="45"/>
    </location>
    <ligand>
        <name>O-phospho-L-serine</name>
        <dbReference type="ChEBI" id="CHEBI:57524"/>
        <note>ligand shared between homodimeric partners</note>
    </ligand>
</feature>
<feature type="binding site" evidence="9 13 15 16">
    <location>
        <position position="79"/>
    </location>
    <ligand>
        <name>pyridoxal 5'-phosphate</name>
        <dbReference type="ChEBI" id="CHEBI:597326"/>
        <note>ligand shared between homodimeric partners</note>
    </ligand>
</feature>
<feature type="binding site" evidence="9 13 15 16">
    <location>
        <position position="80"/>
    </location>
    <ligand>
        <name>pyridoxal 5'-phosphate</name>
        <dbReference type="ChEBI" id="CHEBI:597326"/>
        <note>ligand shared between homodimeric partners</note>
    </ligand>
</feature>
<feature type="binding site" evidence="9 13 15 16">
    <location>
        <position position="107"/>
    </location>
    <ligand>
        <name>pyridoxal 5'-phosphate</name>
        <dbReference type="ChEBI" id="CHEBI:597326"/>
        <note>ligand shared between homodimeric partners</note>
    </ligand>
</feature>
<feature type="binding site" evidence="9 13 15 16">
    <location>
        <position position="156"/>
    </location>
    <ligand>
        <name>pyridoxal 5'-phosphate</name>
        <dbReference type="ChEBI" id="CHEBI:597326"/>
        <note>ligand shared between homodimeric partners</note>
    </ligand>
</feature>
<feature type="binding site" evidence="9 13 15 16">
    <location>
        <position position="176"/>
    </location>
    <ligand>
        <name>pyridoxal 5'-phosphate</name>
        <dbReference type="ChEBI" id="CHEBI:597326"/>
        <note>ligand shared between homodimeric partners</note>
    </ligand>
</feature>
<feature type="binding site" evidence="9 13 15 16">
    <location>
        <position position="199"/>
    </location>
    <ligand>
        <name>pyridoxal 5'-phosphate</name>
        <dbReference type="ChEBI" id="CHEBI:597326"/>
        <note>ligand shared between homodimeric partners</note>
    </ligand>
</feature>
<feature type="binding site" description="in other chain" evidence="7 15 16">
    <location>
        <position position="241"/>
    </location>
    <ligand>
        <name>pyridoxal 5'-phosphate</name>
        <dbReference type="ChEBI" id="CHEBI:597326"/>
        <note>ligand shared between homodimeric partners</note>
    </ligand>
</feature>
<feature type="binding site" description="in other chain" evidence="9 13 15 16">
    <location>
        <position position="242"/>
    </location>
    <ligand>
        <name>pyridoxal 5'-phosphate</name>
        <dbReference type="ChEBI" id="CHEBI:597326"/>
        <note>ligand shared between homodimeric partners</note>
    </ligand>
</feature>
<feature type="binding site" evidence="7 17">
    <location>
        <position position="335"/>
    </location>
    <ligand>
        <name>O-phospho-L-serine</name>
        <dbReference type="ChEBI" id="CHEBI:57524"/>
        <note>ligand shared between homodimeric partners</note>
    </ligand>
</feature>
<feature type="binding site" evidence="7 17">
    <location>
        <position position="336"/>
    </location>
    <ligand>
        <name>O-phospho-L-serine</name>
        <dbReference type="ChEBI" id="CHEBI:57524"/>
        <note>ligand shared between homodimeric partners</note>
    </ligand>
</feature>
<feature type="binding site" evidence="7 17">
    <location>
        <position position="342"/>
    </location>
    <ligand>
        <name>O-phospho-L-serine</name>
        <dbReference type="ChEBI" id="CHEBI:57524"/>
        <note>ligand shared between homodimeric partners</note>
    </ligand>
</feature>
<feature type="modified residue" description="N-acetylmethionine" evidence="18">
    <location>
        <position position="1"/>
    </location>
</feature>
<feature type="modified residue" description="N6-acetyllysine" evidence="19">
    <location>
        <position position="51"/>
    </location>
</feature>
<feature type="modified residue" description="N6-acetyllysine" evidence="1">
    <location>
        <position position="127"/>
    </location>
</feature>
<feature type="modified residue" description="N6-(pyridoxal phosphate)lysine" evidence="7 9 15 16">
    <location>
        <position position="200"/>
    </location>
</feature>
<feature type="modified residue" description="N6-acetyllysine" evidence="19">
    <location>
        <position position="269"/>
    </location>
</feature>
<feature type="modified residue" description="N6-acetyllysine" evidence="19">
    <location>
        <position position="318"/>
    </location>
</feature>
<feature type="modified residue" description="N6-acetyllysine" evidence="19">
    <location>
        <position position="323"/>
    </location>
</feature>
<feature type="modified residue" description="Phosphoserine" evidence="20">
    <location>
        <position position="331"/>
    </location>
</feature>
<feature type="modified residue" description="N6-acetyllysine" evidence="19">
    <location>
        <position position="333"/>
    </location>
</feature>
<feature type="splice variant" id="VSP_000237" description="In isoform 2." evidence="10 11">
    <location>
        <begin position="291"/>
        <end position="336"/>
    </location>
</feature>
<feature type="sequence variant" id="VAR_088493" description="In PSATD; reduced O-phospho-L-serine:2-oxoglutarate aminotransferase catalytic efficiency; 3-fold increase of KM for 3-phosphohydroxypyruvate; 5-fold increase of KM for L-glutamate; decreased function in L-serine biosynthesis shown through in vitro reconstruction of the phosphorylated pathway; does not affect secondary structure; does not affect dimerization; does not affect thermal stability; dbSNP:rs1828113407 and dbSNP:rs1828113460." evidence="6 8">
    <original>S</original>
    <variation>R</variation>
    <location>
        <position position="43"/>
    </location>
</feature>
<feature type="sequence variant" id="VAR_088494" description="In NLS2; dbSNP:rs150812587." evidence="6">
    <original>R</original>
    <variation>W</variation>
    <location>
        <position position="61"/>
    </location>
</feature>
<feature type="sequence variant" id="VAR_088495" description="In NLS2; uncertain significance; dbSNP:rs1828155814." evidence="5">
    <original>Y</original>
    <variation>N</variation>
    <location>
        <position position="70"/>
    </location>
</feature>
<feature type="sequence variant" id="VAR_088496" description="In NLS2; loss of O-phospho-L-serine:2-oxoglutarate aminotransferase activity; loss of function in L-serine biosynthesis shown through in vitro reconstruction of the phosphorylated pathway." evidence="6 8">
    <original>G</original>
    <variation>W</variation>
    <location>
        <position position="79"/>
    </location>
</feature>
<feature type="sequence variant" id="VAR_048235" description="Has no effect on O-phospho-L-serine:2-oxoglutarate aminotransferase catalytic efficiency; does not affect KM for 3-phosphohydroxypyruvate; does not affect KM for L-glutamate; no effect on function in L-serine biosynthesis shown through in vitro reconstruction of the phosphorylated pathway; does not affect secondary structure; does not affect dimerization; does not affect thermal stability; dbSNP:rs11540974." evidence="8">
    <original>P</original>
    <variation>A</variation>
    <location>
        <position position="87"/>
    </location>
</feature>
<feature type="sequence variant" id="VAR_072571" description="In NLS2; does not affect secondary structure; does not affect dimerization; increased thermal stability; dbSNP:rs587777778." evidence="4 6 8">
    <original>A</original>
    <variation>V</variation>
    <location>
        <position position="99"/>
    </location>
</feature>
<feature type="sequence variant" id="VAR_037252" description="In PSATD; has no effect on O-phospho-L-serine:2-oxoglutarate aminotransferase catalytic efficiency; does not affect KM for 3-phosphohydroxypyruvate; does not affect KM for L-glutamate; does not affect secondary structure; results in increased protein aggregation as shown by dynamic light scattering; dbSNP:rs118203967." evidence="3 8">
    <original>D</original>
    <variation>A</variation>
    <location>
        <position position="100"/>
    </location>
</feature>
<feature type="sequence variant" id="VAR_088497" description="In NLS2; uncertain significance; dbSNP:rs369153467." evidence="6">
    <original>E</original>
    <variation>Q</variation>
    <location>
        <position position="155"/>
    </location>
</feature>
<feature type="sequence variant" id="VAR_072572" description="In NLS2; loss of O-phospho-L-serine:2-oxoglutarate aminotransferase activity; loss of function in L-serine biosynthesis shown through in vitro reconstruction of the phosphorylated pathway; dbSNP:rs587777777." evidence="4 8">
    <original>S</original>
    <variation>L</variation>
    <location>
        <position position="179"/>
    </location>
</feature>
<feature type="sequence variant" id="VAR_088498" description="In NLS2; reduced O-phospho-L-serine:2-oxoglutarate aminotransferase catalytic efficiency; 9-fold increase of KM for L-glutamate; does not affect KM for 3-phosphohydroxypyruvate; decreased function in L-serine biosynthesis shown through in vitro reconstruction of the phosphorylated pathway; does not affect secondary structure; does not affect dimerization; dbSNP:rs1305396127." evidence="6 8">
    <original>C</original>
    <variation>R</variation>
    <location>
        <position position="245"/>
    </location>
</feature>
<feature type="sequence variant" id="VAR_088499" description="In NLS2; loss of O-phospho-L-serine:2-oxoglutarate aminotransferase activity; loss of function in L-serine biosynthesis shown through in vitro reconstruction of the phosphorylated pathway; dbSNP:rs202103028." evidence="5 8">
    <original>R</original>
    <variation>W</variation>
    <location>
        <position position="342"/>
    </location>
</feature>
<feature type="sequence conflict" description="In Ref. 5; AAH16645." evidence="12" ref="5">
    <original>L</original>
    <variation>V</variation>
    <location>
        <position position="40"/>
    </location>
</feature>
<feature type="strand" evidence="21">
    <location>
        <begin position="12"/>
        <end position="14"/>
    </location>
</feature>
<feature type="helix" evidence="21">
    <location>
        <begin position="19"/>
        <end position="27"/>
    </location>
</feature>
<feature type="strand" evidence="21">
    <location>
        <begin position="29"/>
        <end position="31"/>
    </location>
</feature>
<feature type="helix" evidence="21">
    <location>
        <begin position="32"/>
        <end position="34"/>
    </location>
</feature>
<feature type="strand" evidence="21">
    <location>
        <begin position="35"/>
        <end position="37"/>
    </location>
</feature>
<feature type="helix" evidence="21">
    <location>
        <begin position="39"/>
        <end position="41"/>
    </location>
</feature>
<feature type="helix" evidence="21">
    <location>
        <begin position="47"/>
        <end position="64"/>
    </location>
</feature>
<feature type="strand" evidence="21">
    <location>
        <begin position="70"/>
        <end position="77"/>
    </location>
</feature>
<feature type="helix" evidence="21">
    <location>
        <begin position="78"/>
        <end position="90"/>
    </location>
</feature>
<feature type="helix" evidence="21">
    <location>
        <begin position="91"/>
        <end position="93"/>
    </location>
</feature>
<feature type="strand" evidence="21">
    <location>
        <begin position="98"/>
        <end position="102"/>
    </location>
</feature>
<feature type="helix" evidence="21">
    <location>
        <begin position="106"/>
        <end position="115"/>
    </location>
</feature>
<feature type="turn" evidence="21">
    <location>
        <begin position="116"/>
        <end position="118"/>
    </location>
</feature>
<feature type="strand" evidence="21">
    <location>
        <begin position="119"/>
        <end position="125"/>
    </location>
</feature>
<feature type="strand" evidence="21">
    <location>
        <begin position="129"/>
        <end position="131"/>
    </location>
</feature>
<feature type="helix" evidence="21">
    <location>
        <begin position="137"/>
        <end position="139"/>
    </location>
</feature>
<feature type="strand" evidence="21">
    <location>
        <begin position="149"/>
        <end position="155"/>
    </location>
</feature>
<feature type="turn" evidence="21">
    <location>
        <begin position="156"/>
        <end position="159"/>
    </location>
</feature>
<feature type="strand" evidence="21">
    <location>
        <begin position="173"/>
        <end position="176"/>
    </location>
</feature>
<feature type="turn" evidence="21">
    <location>
        <begin position="178"/>
        <end position="182"/>
    </location>
</feature>
<feature type="helix" evidence="21">
    <location>
        <begin position="188"/>
        <end position="190"/>
    </location>
</feature>
<feature type="strand" evidence="21">
    <location>
        <begin position="192"/>
        <end position="197"/>
    </location>
</feature>
<feature type="turn" evidence="21">
    <location>
        <begin position="198"/>
        <end position="202"/>
    </location>
</feature>
<feature type="strand" evidence="21">
    <location>
        <begin position="208"/>
        <end position="213"/>
    </location>
</feature>
<feature type="helix" evidence="21">
    <location>
        <begin position="214"/>
        <end position="216"/>
    </location>
</feature>
<feature type="helix" evidence="21">
    <location>
        <begin position="226"/>
        <end position="228"/>
    </location>
</feature>
<feature type="helix" evidence="21">
    <location>
        <begin position="230"/>
        <end position="235"/>
    </location>
</feature>
<feature type="turn" evidence="21">
    <location>
        <begin position="236"/>
        <end position="238"/>
    </location>
</feature>
<feature type="helix" evidence="21">
    <location>
        <begin position="245"/>
        <end position="260"/>
    </location>
</feature>
<feature type="helix" evidence="21">
    <location>
        <begin position="263"/>
        <end position="283"/>
    </location>
</feature>
<feature type="turn" evidence="22">
    <location>
        <begin position="284"/>
        <end position="287"/>
    </location>
</feature>
<feature type="strand" evidence="21">
    <location>
        <begin position="288"/>
        <end position="290"/>
    </location>
</feature>
<feature type="helix" evidence="21">
    <location>
        <begin position="295"/>
        <end position="297"/>
    </location>
</feature>
<feature type="strand" evidence="21">
    <location>
        <begin position="300"/>
        <end position="309"/>
    </location>
</feature>
<feature type="helix" evidence="21">
    <location>
        <begin position="314"/>
        <end position="326"/>
    </location>
</feature>
<feature type="strand" evidence="21">
    <location>
        <begin position="329"/>
        <end position="331"/>
    </location>
</feature>
<feature type="turn" evidence="21">
    <location>
        <begin position="336"/>
        <end position="338"/>
    </location>
</feature>
<feature type="strand" evidence="21">
    <location>
        <begin position="340"/>
        <end position="344"/>
    </location>
</feature>
<feature type="helix" evidence="21">
    <location>
        <begin position="351"/>
        <end position="368"/>
    </location>
</feature>
<dbReference type="EC" id="2.6.1.52" evidence="7 8"/>
<dbReference type="EMBL" id="AF113132">
    <property type="protein sequence ID" value="AAD42052.1"/>
    <property type="molecule type" value="mRNA"/>
</dbReference>
<dbReference type="EMBL" id="AY131232">
    <property type="protein sequence ID" value="AAN71736.1"/>
    <property type="molecule type" value="mRNA"/>
</dbReference>
<dbReference type="EMBL" id="BT006840">
    <property type="protein sequence ID" value="AAP35486.1"/>
    <property type="molecule type" value="mRNA"/>
</dbReference>
<dbReference type="EMBL" id="AL353594">
    <property type="status" value="NOT_ANNOTATED_CDS"/>
    <property type="molecule type" value="Genomic_DNA"/>
</dbReference>
<dbReference type="EMBL" id="CH471089">
    <property type="protein sequence ID" value="EAW62621.1"/>
    <property type="molecule type" value="Genomic_DNA"/>
</dbReference>
<dbReference type="EMBL" id="CH471089">
    <property type="protein sequence ID" value="EAW62617.1"/>
    <property type="molecule type" value="Genomic_DNA"/>
</dbReference>
<dbReference type="EMBL" id="BC000971">
    <property type="protein sequence ID" value="AAH00971.1"/>
    <property type="molecule type" value="mRNA"/>
</dbReference>
<dbReference type="EMBL" id="BC004863">
    <property type="protein sequence ID" value="AAH04863.1"/>
    <property type="molecule type" value="mRNA"/>
</dbReference>
<dbReference type="EMBL" id="BC016645">
    <property type="protein sequence ID" value="AAH16645.1"/>
    <property type="molecule type" value="mRNA"/>
</dbReference>
<dbReference type="EMBL" id="BC018129">
    <property type="protein sequence ID" value="AAH18129.1"/>
    <property type="molecule type" value="mRNA"/>
</dbReference>
<dbReference type="CCDS" id="CCDS6659.1">
    <molecule id="Q9Y617-2"/>
</dbReference>
<dbReference type="CCDS" id="CCDS6660.1">
    <molecule id="Q9Y617-1"/>
</dbReference>
<dbReference type="RefSeq" id="NP_066977.1">
    <molecule id="Q9Y617-2"/>
    <property type="nucleotide sequence ID" value="NM_021154.5"/>
</dbReference>
<dbReference type="RefSeq" id="NP_478059.1">
    <molecule id="Q9Y617-1"/>
    <property type="nucleotide sequence ID" value="NM_058179.4"/>
</dbReference>
<dbReference type="PDB" id="3E77">
    <property type="method" value="X-ray"/>
    <property type="resolution" value="2.50 A"/>
    <property type="chains" value="A/B/C=17-370"/>
</dbReference>
<dbReference type="PDB" id="8A5V">
    <property type="method" value="X-ray"/>
    <property type="resolution" value="2.46 A"/>
    <property type="chains" value="A/B/C/D/E/F/G/H=1-370"/>
</dbReference>
<dbReference type="PDB" id="8A5W">
    <property type="method" value="X-ray"/>
    <property type="resolution" value="2.78 A"/>
    <property type="chains" value="A/B/C/D/E/F/G/H=6-370, E=1-370"/>
</dbReference>
<dbReference type="PDBsum" id="3E77"/>
<dbReference type="PDBsum" id="8A5V"/>
<dbReference type="PDBsum" id="8A5W"/>
<dbReference type="SMR" id="Q9Y617"/>
<dbReference type="BioGRID" id="119001">
    <property type="interactions" value="99"/>
</dbReference>
<dbReference type="FunCoup" id="Q9Y617">
    <property type="interactions" value="941"/>
</dbReference>
<dbReference type="IntAct" id="Q9Y617">
    <property type="interactions" value="31"/>
</dbReference>
<dbReference type="MINT" id="Q9Y617"/>
<dbReference type="STRING" id="9606.ENSP00000365773"/>
<dbReference type="DrugBank" id="DB00142">
    <property type="generic name" value="Glutamic acid"/>
</dbReference>
<dbReference type="DrugBank" id="DB00114">
    <property type="generic name" value="Pyridoxal phosphate"/>
</dbReference>
<dbReference type="DrugCentral" id="Q9Y617"/>
<dbReference type="GlyGen" id="Q9Y617">
    <property type="glycosylation" value="2 sites, 1 N-linked glycan (1 site), 1 O-linked glycan (1 site)"/>
</dbReference>
<dbReference type="iPTMnet" id="Q9Y617"/>
<dbReference type="MetOSite" id="Q9Y617"/>
<dbReference type="PhosphoSitePlus" id="Q9Y617"/>
<dbReference type="SwissPalm" id="Q9Y617"/>
<dbReference type="BioMuta" id="PSAT1"/>
<dbReference type="DMDM" id="20141815"/>
<dbReference type="REPRODUCTION-2DPAGE" id="IPI00001734"/>
<dbReference type="CPTAC" id="CPTAC-2773"/>
<dbReference type="CPTAC" id="CPTAC-2774"/>
<dbReference type="CPTAC" id="CPTAC-2775"/>
<dbReference type="jPOST" id="Q9Y617"/>
<dbReference type="MassIVE" id="Q9Y617"/>
<dbReference type="PaxDb" id="9606-ENSP00000365773"/>
<dbReference type="PeptideAtlas" id="Q9Y617"/>
<dbReference type="ProteomicsDB" id="86580">
    <molecule id="Q9Y617-1"/>
</dbReference>
<dbReference type="ProteomicsDB" id="86581">
    <molecule id="Q9Y617-2"/>
</dbReference>
<dbReference type="Pumba" id="Q9Y617"/>
<dbReference type="Antibodypedia" id="27405">
    <property type="antibodies" value="252 antibodies from 31 providers"/>
</dbReference>
<dbReference type="CPTC" id="Q9Y617">
    <property type="antibodies" value="4 antibodies"/>
</dbReference>
<dbReference type="DNASU" id="29968"/>
<dbReference type="Ensembl" id="ENST00000347159.6">
    <molecule id="Q9Y617-2"/>
    <property type="protein sequence ID" value="ENSP00000317606.2"/>
    <property type="gene ID" value="ENSG00000135069.14"/>
</dbReference>
<dbReference type="Ensembl" id="ENST00000376588.4">
    <molecule id="Q9Y617-1"/>
    <property type="protein sequence ID" value="ENSP00000365773.3"/>
    <property type="gene ID" value="ENSG00000135069.14"/>
</dbReference>
<dbReference type="GeneID" id="29968"/>
<dbReference type="KEGG" id="hsa:29968"/>
<dbReference type="MANE-Select" id="ENST00000376588.4">
    <property type="protein sequence ID" value="ENSP00000365773.3"/>
    <property type="RefSeq nucleotide sequence ID" value="NM_058179.4"/>
    <property type="RefSeq protein sequence ID" value="NP_478059.1"/>
</dbReference>
<dbReference type="UCSC" id="uc004ala.5">
    <molecule id="Q9Y617-1"/>
    <property type="organism name" value="human"/>
</dbReference>
<dbReference type="AGR" id="HGNC:19129"/>
<dbReference type="CTD" id="29968"/>
<dbReference type="DisGeNET" id="29968"/>
<dbReference type="GeneCards" id="PSAT1"/>
<dbReference type="GeneReviews" id="PSAT1"/>
<dbReference type="HGNC" id="HGNC:19129">
    <property type="gene designation" value="PSAT1"/>
</dbReference>
<dbReference type="HPA" id="ENSG00000135069">
    <property type="expression patterns" value="Tissue enhanced (brain, kidney, liver)"/>
</dbReference>
<dbReference type="MalaCards" id="PSAT1"/>
<dbReference type="MIM" id="610936">
    <property type="type" value="gene"/>
</dbReference>
<dbReference type="MIM" id="610992">
    <property type="type" value="phenotype"/>
</dbReference>
<dbReference type="MIM" id="616038">
    <property type="type" value="phenotype"/>
</dbReference>
<dbReference type="neXtProt" id="NX_Q9Y617"/>
<dbReference type="OpenTargets" id="ENSG00000135069"/>
<dbReference type="Orphanet" id="583602">
    <property type="disease" value="Neu-Laxova syndrome due to phosphoserine aminotransferase deficiency"/>
</dbReference>
<dbReference type="Orphanet" id="284417">
    <property type="disease" value="Phosphoserine aminotransferase deficiency, infantile/juvenile form"/>
</dbReference>
<dbReference type="PharmGKB" id="PA128395782"/>
<dbReference type="VEuPathDB" id="HostDB:ENSG00000135069"/>
<dbReference type="eggNOG" id="KOG2790">
    <property type="taxonomic scope" value="Eukaryota"/>
</dbReference>
<dbReference type="GeneTree" id="ENSGT00940000153241"/>
<dbReference type="HOGENOM" id="CLU_034866_0_1_1"/>
<dbReference type="InParanoid" id="Q9Y617"/>
<dbReference type="OMA" id="AFVYFCD"/>
<dbReference type="OrthoDB" id="1703350at2759"/>
<dbReference type="PAN-GO" id="Q9Y617">
    <property type="GO annotations" value="4 GO annotations based on evolutionary models"/>
</dbReference>
<dbReference type="PhylomeDB" id="Q9Y617"/>
<dbReference type="TreeFam" id="TF312975"/>
<dbReference type="BioCyc" id="MetaCyc:HS05946-MONOMER"/>
<dbReference type="BRENDA" id="2.6.1.4">
    <property type="organism ID" value="2681"/>
</dbReference>
<dbReference type="BRENDA" id="2.6.1.52">
    <property type="organism ID" value="2681"/>
</dbReference>
<dbReference type="PathwayCommons" id="Q9Y617"/>
<dbReference type="Reactome" id="R-HSA-977347">
    <property type="pathway name" value="Serine biosynthesis"/>
</dbReference>
<dbReference type="SABIO-RK" id="Q9Y617"/>
<dbReference type="SignaLink" id="Q9Y617"/>
<dbReference type="SIGNOR" id="Q9Y617"/>
<dbReference type="UniPathway" id="UPA00135">
    <property type="reaction ID" value="UER00197"/>
</dbReference>
<dbReference type="BioGRID-ORCS" id="29968">
    <property type="hits" value="109 hits in 1135 CRISPR screens"/>
</dbReference>
<dbReference type="ChiTaRS" id="PSAT1">
    <property type="organism name" value="human"/>
</dbReference>
<dbReference type="EvolutionaryTrace" id="Q9Y617"/>
<dbReference type="GeneWiki" id="PSAT1"/>
<dbReference type="GenomeRNAi" id="29968"/>
<dbReference type="Pharos" id="Q9Y617">
    <property type="development level" value="Tbio"/>
</dbReference>
<dbReference type="PRO" id="PR:Q9Y617"/>
<dbReference type="Proteomes" id="UP000005640">
    <property type="component" value="Chromosome 9"/>
</dbReference>
<dbReference type="RNAct" id="Q9Y617">
    <property type="molecule type" value="protein"/>
</dbReference>
<dbReference type="Bgee" id="ENSG00000135069">
    <property type="expression patterns" value="Expressed in ventricular zone and 177 other cell types or tissues"/>
</dbReference>
<dbReference type="ExpressionAtlas" id="Q9Y617">
    <property type="expression patterns" value="baseline and differential"/>
</dbReference>
<dbReference type="GO" id="GO:0005737">
    <property type="term" value="C:cytoplasm"/>
    <property type="evidence" value="ECO:0000318"/>
    <property type="project" value="GO_Central"/>
</dbReference>
<dbReference type="GO" id="GO:0005829">
    <property type="term" value="C:cytosol"/>
    <property type="evidence" value="ECO:0000314"/>
    <property type="project" value="HPA"/>
</dbReference>
<dbReference type="GO" id="GO:0070062">
    <property type="term" value="C:extracellular exosome"/>
    <property type="evidence" value="ECO:0007005"/>
    <property type="project" value="UniProtKB"/>
</dbReference>
<dbReference type="GO" id="GO:0042802">
    <property type="term" value="F:identical protein binding"/>
    <property type="evidence" value="ECO:0000353"/>
    <property type="project" value="IntAct"/>
</dbReference>
<dbReference type="GO" id="GO:0004648">
    <property type="term" value="F:O-phospho-L-serine:2-oxoglutarate aminotransferase activity"/>
    <property type="evidence" value="ECO:0000314"/>
    <property type="project" value="UniProtKB"/>
</dbReference>
<dbReference type="GO" id="GO:0030170">
    <property type="term" value="F:pyridoxal phosphate binding"/>
    <property type="evidence" value="ECO:0000318"/>
    <property type="project" value="GO_Central"/>
</dbReference>
<dbReference type="GO" id="GO:0006564">
    <property type="term" value="P:L-serine biosynthetic process"/>
    <property type="evidence" value="ECO:0000314"/>
    <property type="project" value="UniProtKB"/>
</dbReference>
<dbReference type="GO" id="GO:0008615">
    <property type="term" value="P:pyridoxine biosynthetic process"/>
    <property type="evidence" value="ECO:0000303"/>
    <property type="project" value="UniProtKB"/>
</dbReference>
<dbReference type="CDD" id="cd00611">
    <property type="entry name" value="PSAT_like"/>
    <property type="match status" value="1"/>
</dbReference>
<dbReference type="FunFam" id="3.40.640.10:FF:000010">
    <property type="entry name" value="Phosphoserine aminotransferase"/>
    <property type="match status" value="1"/>
</dbReference>
<dbReference type="FunFam" id="3.90.1150.10:FF:000121">
    <property type="entry name" value="Phosphoserine aminotransferase"/>
    <property type="match status" value="1"/>
</dbReference>
<dbReference type="Gene3D" id="3.90.1150.10">
    <property type="entry name" value="Aspartate Aminotransferase, domain 1"/>
    <property type="match status" value="1"/>
</dbReference>
<dbReference type="Gene3D" id="3.40.640.10">
    <property type="entry name" value="Type I PLP-dependent aspartate aminotransferase-like (Major domain)"/>
    <property type="match status" value="1"/>
</dbReference>
<dbReference type="HAMAP" id="MF_00160">
    <property type="entry name" value="SerC_aminotrans_5"/>
    <property type="match status" value="1"/>
</dbReference>
<dbReference type="InterPro" id="IPR000192">
    <property type="entry name" value="Aminotrans_V_dom"/>
</dbReference>
<dbReference type="InterPro" id="IPR020578">
    <property type="entry name" value="Aminotrans_V_PyrdxlP_BS"/>
</dbReference>
<dbReference type="InterPro" id="IPR022278">
    <property type="entry name" value="Pser_aminoTfrase"/>
</dbReference>
<dbReference type="InterPro" id="IPR015424">
    <property type="entry name" value="PyrdxlP-dep_Trfase"/>
</dbReference>
<dbReference type="InterPro" id="IPR015421">
    <property type="entry name" value="PyrdxlP-dep_Trfase_major"/>
</dbReference>
<dbReference type="InterPro" id="IPR015422">
    <property type="entry name" value="PyrdxlP-dep_Trfase_small"/>
</dbReference>
<dbReference type="NCBIfam" id="NF003764">
    <property type="entry name" value="PRK05355.1"/>
    <property type="match status" value="1"/>
</dbReference>
<dbReference type="NCBIfam" id="TIGR01364">
    <property type="entry name" value="serC_1"/>
    <property type="match status" value="1"/>
</dbReference>
<dbReference type="PANTHER" id="PTHR43247">
    <property type="entry name" value="PHOSPHOSERINE AMINOTRANSFERASE"/>
    <property type="match status" value="1"/>
</dbReference>
<dbReference type="PANTHER" id="PTHR43247:SF5">
    <property type="entry name" value="PHOSPHOSERINE AMINOTRANSFERASE"/>
    <property type="match status" value="1"/>
</dbReference>
<dbReference type="Pfam" id="PF00266">
    <property type="entry name" value="Aminotran_5"/>
    <property type="match status" value="1"/>
</dbReference>
<dbReference type="PIRSF" id="PIRSF000525">
    <property type="entry name" value="SerC"/>
    <property type="match status" value="1"/>
</dbReference>
<dbReference type="SUPFAM" id="SSF53383">
    <property type="entry name" value="PLP-dependent transferases"/>
    <property type="match status" value="1"/>
</dbReference>
<dbReference type="PROSITE" id="PS00595">
    <property type="entry name" value="AA_TRANSFER_CLASS_5"/>
    <property type="match status" value="1"/>
</dbReference>
<protein>
    <recommendedName>
        <fullName evidence="12">Phosphoserine aminotransferase</fullName>
        <ecNumber evidence="7 8">2.6.1.52</ecNumber>
    </recommendedName>
    <alternativeName>
        <fullName>Phosphohydroxythreonine aminotransferase</fullName>
        <shortName>PSAT</shortName>
    </alternativeName>
</protein>
<evidence type="ECO:0000250" key="1">
    <source>
        <dbReference type="UniProtKB" id="Q99K85"/>
    </source>
</evidence>
<evidence type="ECO:0000269" key="2">
    <source>
    </source>
</evidence>
<evidence type="ECO:0000269" key="3">
    <source>
    </source>
</evidence>
<evidence type="ECO:0000269" key="4">
    <source>
    </source>
</evidence>
<evidence type="ECO:0000269" key="5">
    <source>
    </source>
</evidence>
<evidence type="ECO:0000269" key="6">
    <source>
    </source>
</evidence>
<evidence type="ECO:0000269" key="7">
    <source>
    </source>
</evidence>
<evidence type="ECO:0000269" key="8">
    <source>
    </source>
</evidence>
<evidence type="ECO:0000269" key="9">
    <source ref="11"/>
</evidence>
<evidence type="ECO:0000303" key="10">
    <source>
    </source>
</evidence>
<evidence type="ECO:0000303" key="11">
    <source>
    </source>
</evidence>
<evidence type="ECO:0000305" key="12"/>
<evidence type="ECO:0000305" key="13">
    <source>
    </source>
</evidence>
<evidence type="ECO:0000312" key="14">
    <source>
        <dbReference type="HGNC" id="HGNC:19129"/>
    </source>
</evidence>
<evidence type="ECO:0007744" key="15">
    <source>
        <dbReference type="PDB" id="3E77"/>
    </source>
</evidence>
<evidence type="ECO:0007744" key="16">
    <source>
        <dbReference type="PDB" id="8A5V"/>
    </source>
</evidence>
<evidence type="ECO:0007744" key="17">
    <source>
        <dbReference type="PDB" id="8A5W"/>
    </source>
</evidence>
<evidence type="ECO:0007744" key="18">
    <source>
    </source>
</evidence>
<evidence type="ECO:0007744" key="19">
    <source>
    </source>
</evidence>
<evidence type="ECO:0007744" key="20">
    <source>
    </source>
</evidence>
<evidence type="ECO:0007829" key="21">
    <source>
        <dbReference type="PDB" id="8A5V"/>
    </source>
</evidence>
<evidence type="ECO:0007829" key="22">
    <source>
        <dbReference type="PDB" id="8A5W"/>
    </source>
</evidence>
<name>SERC_HUMAN</name>
<organism>
    <name type="scientific">Homo sapiens</name>
    <name type="common">Human</name>
    <dbReference type="NCBI Taxonomy" id="9606"/>
    <lineage>
        <taxon>Eukaryota</taxon>
        <taxon>Metazoa</taxon>
        <taxon>Chordata</taxon>
        <taxon>Craniata</taxon>
        <taxon>Vertebrata</taxon>
        <taxon>Euteleostomi</taxon>
        <taxon>Mammalia</taxon>
        <taxon>Eutheria</taxon>
        <taxon>Euarchontoglires</taxon>
        <taxon>Primates</taxon>
        <taxon>Haplorrhini</taxon>
        <taxon>Catarrhini</taxon>
        <taxon>Hominidae</taxon>
        <taxon>Homo</taxon>
    </lineage>
</organism>
<proteinExistence type="evidence at protein level"/>